<sequence length="343" mass="35955">MKLRFGVTAAEKKAWIVFLVLLGLTAAVLIISAGLGQRFIPPWDVAKTFFGAGSKLDELMIMSFRMPRILTALCAGVCLAAAGAILQGLVRNPLASPDIIGITGGAAVAVVLLMMFFSDRSSSLTISLSWLPAAAFIGASAVGLIVYLLAYKNGASTFRLVLIGIGFSMSAQAMTTLLMIKGPIYRASQANVYITGSVYGSNWQHVKIAIILSVILLFICFVALKNMNIQVLGEDIAAGAGSAVQRNRFFLLLLSTALTGCAVSVAGTIGFVGLMAPHIARRLVGSSYGALLPASALIGALLVLTADIVGRTLFAPVEVPAGVFTAAIGAPYFIYLLYKTRNS</sequence>
<organism>
    <name type="scientific">Bacillus subtilis (strain 168)</name>
    <dbReference type="NCBI Taxonomy" id="224308"/>
    <lineage>
        <taxon>Bacteria</taxon>
        <taxon>Bacillati</taxon>
        <taxon>Bacillota</taxon>
        <taxon>Bacilli</taxon>
        <taxon>Bacillales</taxon>
        <taxon>Bacillaceae</taxon>
        <taxon>Bacillus</taxon>
    </lineage>
</organism>
<evidence type="ECO:0000255" key="1"/>
<evidence type="ECO:0000269" key="2">
    <source>
    </source>
</evidence>
<evidence type="ECO:0000269" key="3">
    <source>
    </source>
</evidence>
<evidence type="ECO:0000305" key="4"/>
<evidence type="ECO:0000305" key="5">
    <source>
    </source>
</evidence>
<keyword id="KW-1003">Cell membrane</keyword>
<keyword id="KW-0406">Ion transport</keyword>
<keyword id="KW-0408">Iron</keyword>
<keyword id="KW-0410">Iron transport</keyword>
<keyword id="KW-0472">Membrane</keyword>
<keyword id="KW-1185">Reference proteome</keyword>
<keyword id="KW-0812">Transmembrane</keyword>
<keyword id="KW-1133">Transmembrane helix</keyword>
<keyword id="KW-0813">Transport</keyword>
<comment type="function">
    <text evidence="5">Part of the ABC transporter complex YfiYZ/YfhA/YusV involved in import of the iron-hydroxamate siderophores schizokinen, arthrobactin and corprogen.</text>
</comment>
<comment type="subunit">
    <text evidence="4">The complex is composed of one ATP-binding protein (YusV), two transmembrane proteins (YfiZ and YfhA) and a solute-binding protein (YfiY).</text>
</comment>
<comment type="subcellular location">
    <subcellularLocation>
        <location evidence="4">Cell membrane</location>
        <topology evidence="4">Multi-pass membrane protein</topology>
    </subcellularLocation>
</comment>
<comment type="induction">
    <text evidence="2 3">Induced by iron starvation, repressed by fur.</text>
</comment>
<comment type="disruption phenotype">
    <text evidence="3">Strains lacking this gene show a reduction in growth stimulation by the iron-hydroxamate siderophores schizokinen and arthrobactin compared to wild-type.</text>
</comment>
<comment type="similarity">
    <text evidence="4">Belongs to the binding-protein-dependent transport system permease family. FecCD subfamily.</text>
</comment>
<reference key="1">
    <citation type="journal article" date="1996" name="DNA Res.">
        <title>Cloning and sequencing of a 27.8-kb nucleotide sequence of the 79 degrees-81 degrees region of the Bacillus subtilis genome containing the sspE locus.</title>
        <authorList>
            <person name="Yamamoto H."/>
            <person name="Uchiyama S."/>
            <person name="Sekiguchi J."/>
        </authorList>
    </citation>
    <scope>NUCLEOTIDE SEQUENCE [GENOMIC DNA]</scope>
    <source>
        <strain>168</strain>
    </source>
</reference>
<reference key="2">
    <citation type="journal article" date="1997" name="Nature">
        <title>The complete genome sequence of the Gram-positive bacterium Bacillus subtilis.</title>
        <authorList>
            <person name="Kunst F."/>
            <person name="Ogasawara N."/>
            <person name="Moszer I."/>
            <person name="Albertini A.M."/>
            <person name="Alloni G."/>
            <person name="Azevedo V."/>
            <person name="Bertero M.G."/>
            <person name="Bessieres P."/>
            <person name="Bolotin A."/>
            <person name="Borchert S."/>
            <person name="Borriss R."/>
            <person name="Boursier L."/>
            <person name="Brans A."/>
            <person name="Braun M."/>
            <person name="Brignell S.C."/>
            <person name="Bron S."/>
            <person name="Brouillet S."/>
            <person name="Bruschi C.V."/>
            <person name="Caldwell B."/>
            <person name="Capuano V."/>
            <person name="Carter N.M."/>
            <person name="Choi S.-K."/>
            <person name="Codani J.-J."/>
            <person name="Connerton I.F."/>
            <person name="Cummings N.J."/>
            <person name="Daniel R.A."/>
            <person name="Denizot F."/>
            <person name="Devine K.M."/>
            <person name="Duesterhoeft A."/>
            <person name="Ehrlich S.D."/>
            <person name="Emmerson P.T."/>
            <person name="Entian K.-D."/>
            <person name="Errington J."/>
            <person name="Fabret C."/>
            <person name="Ferrari E."/>
            <person name="Foulger D."/>
            <person name="Fritz C."/>
            <person name="Fujita M."/>
            <person name="Fujita Y."/>
            <person name="Fuma S."/>
            <person name="Galizzi A."/>
            <person name="Galleron N."/>
            <person name="Ghim S.-Y."/>
            <person name="Glaser P."/>
            <person name="Goffeau A."/>
            <person name="Golightly E.J."/>
            <person name="Grandi G."/>
            <person name="Guiseppi G."/>
            <person name="Guy B.J."/>
            <person name="Haga K."/>
            <person name="Haiech J."/>
            <person name="Harwood C.R."/>
            <person name="Henaut A."/>
            <person name="Hilbert H."/>
            <person name="Holsappel S."/>
            <person name="Hosono S."/>
            <person name="Hullo M.-F."/>
            <person name="Itaya M."/>
            <person name="Jones L.-M."/>
            <person name="Joris B."/>
            <person name="Karamata D."/>
            <person name="Kasahara Y."/>
            <person name="Klaerr-Blanchard M."/>
            <person name="Klein C."/>
            <person name="Kobayashi Y."/>
            <person name="Koetter P."/>
            <person name="Koningstein G."/>
            <person name="Krogh S."/>
            <person name="Kumano M."/>
            <person name="Kurita K."/>
            <person name="Lapidus A."/>
            <person name="Lardinois S."/>
            <person name="Lauber J."/>
            <person name="Lazarevic V."/>
            <person name="Lee S.-M."/>
            <person name="Levine A."/>
            <person name="Liu H."/>
            <person name="Masuda S."/>
            <person name="Mauel C."/>
            <person name="Medigue C."/>
            <person name="Medina N."/>
            <person name="Mellado R.P."/>
            <person name="Mizuno M."/>
            <person name="Moestl D."/>
            <person name="Nakai S."/>
            <person name="Noback M."/>
            <person name="Noone D."/>
            <person name="O'Reilly M."/>
            <person name="Ogawa K."/>
            <person name="Ogiwara A."/>
            <person name="Oudega B."/>
            <person name="Park S.-H."/>
            <person name="Parro V."/>
            <person name="Pohl T.M."/>
            <person name="Portetelle D."/>
            <person name="Porwollik S."/>
            <person name="Prescott A.M."/>
            <person name="Presecan E."/>
            <person name="Pujic P."/>
            <person name="Purnelle B."/>
            <person name="Rapoport G."/>
            <person name="Rey M."/>
            <person name="Reynolds S."/>
            <person name="Rieger M."/>
            <person name="Rivolta C."/>
            <person name="Rocha E."/>
            <person name="Roche B."/>
            <person name="Rose M."/>
            <person name="Sadaie Y."/>
            <person name="Sato T."/>
            <person name="Scanlan E."/>
            <person name="Schleich S."/>
            <person name="Schroeter R."/>
            <person name="Scoffone F."/>
            <person name="Sekiguchi J."/>
            <person name="Sekowska A."/>
            <person name="Seror S.J."/>
            <person name="Serror P."/>
            <person name="Shin B.-S."/>
            <person name="Soldo B."/>
            <person name="Sorokin A."/>
            <person name="Tacconi E."/>
            <person name="Takagi T."/>
            <person name="Takahashi H."/>
            <person name="Takemaru K."/>
            <person name="Takeuchi M."/>
            <person name="Tamakoshi A."/>
            <person name="Tanaka T."/>
            <person name="Terpstra P."/>
            <person name="Tognoni A."/>
            <person name="Tosato V."/>
            <person name="Uchiyama S."/>
            <person name="Vandenbol M."/>
            <person name="Vannier F."/>
            <person name="Vassarotti A."/>
            <person name="Viari A."/>
            <person name="Wambutt R."/>
            <person name="Wedler E."/>
            <person name="Wedler H."/>
            <person name="Weitzenegger T."/>
            <person name="Winters P."/>
            <person name="Wipat A."/>
            <person name="Yamamoto H."/>
            <person name="Yamane K."/>
            <person name="Yasumoto K."/>
            <person name="Yata K."/>
            <person name="Yoshida K."/>
            <person name="Yoshikawa H.-F."/>
            <person name="Zumstein E."/>
            <person name="Yoshikawa H."/>
            <person name="Danchin A."/>
        </authorList>
    </citation>
    <scope>NUCLEOTIDE SEQUENCE [LARGE SCALE GENOMIC DNA]</scope>
    <source>
        <strain>168</strain>
    </source>
</reference>
<reference key="3">
    <citation type="journal article" date="2002" name="Mol. Microbiol.">
        <title>Global analysis of the Bacillus subtilis Fur regulon and the iron starvation stimulon.</title>
        <authorList>
            <person name="Baichoo N."/>
            <person name="Wang T."/>
            <person name="Ye R."/>
            <person name="Helmann J.D."/>
        </authorList>
    </citation>
    <scope>INDUCTION</scope>
    <source>
        <strain>168</strain>
    </source>
</reference>
<reference key="4">
    <citation type="journal article" date="2006" name="J. Bacteriol.">
        <title>Role of the Fur regulon in iron transport in Bacillus subtilis.</title>
        <authorList>
            <person name="Ollinger J."/>
            <person name="Song K.-B."/>
            <person name="Antelmann H."/>
            <person name="Hecker M."/>
            <person name="Helmann J.D."/>
        </authorList>
    </citation>
    <scope>FUNCTION</scope>
    <scope>POSSIBLE SUBUNIT</scope>
    <scope>DISRUPTION PHENOTYPE</scope>
    <scope>INDUCTION</scope>
    <source>
        <strain>168</strain>
    </source>
</reference>
<proteinExistence type="evidence at protein level"/>
<protein>
    <recommendedName>
        <fullName>Probable siderophore transport system permease protein YfhA</fullName>
    </recommendedName>
</protein>
<feature type="chain" id="PRO_0000363829" description="Probable siderophore transport system permease protein YfhA">
    <location>
        <begin position="1"/>
        <end position="343"/>
    </location>
</feature>
<feature type="transmembrane region" description="Helical" evidence="1">
    <location>
        <begin position="15"/>
        <end position="35"/>
    </location>
</feature>
<feature type="transmembrane region" description="Helical" evidence="1">
    <location>
        <begin position="69"/>
        <end position="89"/>
    </location>
</feature>
<feature type="transmembrane region" description="Helical" evidence="1">
    <location>
        <begin position="97"/>
        <end position="117"/>
    </location>
</feature>
<feature type="transmembrane region" description="Helical" evidence="1">
    <location>
        <begin position="130"/>
        <end position="150"/>
    </location>
</feature>
<feature type="transmembrane region" description="Helical" evidence="1">
    <location>
        <begin position="160"/>
        <end position="180"/>
    </location>
</feature>
<feature type="transmembrane region" description="Helical" evidence="1">
    <location>
        <begin position="204"/>
        <end position="224"/>
    </location>
</feature>
<feature type="transmembrane region" description="Helical" evidence="1">
    <location>
        <begin position="249"/>
        <end position="269"/>
    </location>
</feature>
<feature type="transmembrane region" description="Helical" evidence="1">
    <location>
        <begin position="289"/>
        <end position="309"/>
    </location>
</feature>
<feature type="transmembrane region" description="Helical" evidence="1">
    <location>
        <begin position="317"/>
        <end position="337"/>
    </location>
</feature>
<accession>O31569</accession>
<accession>Q79EW1</accession>
<name>YFHA_BACSU</name>
<dbReference type="EMBL" id="D85082">
    <property type="protein sequence ID" value="BAA24467.1"/>
    <property type="molecule type" value="Genomic_DNA"/>
</dbReference>
<dbReference type="EMBL" id="AL009126">
    <property type="protein sequence ID" value="CAB12675.1"/>
    <property type="molecule type" value="Genomic_DNA"/>
</dbReference>
<dbReference type="PIR" id="B69800">
    <property type="entry name" value="B69800"/>
</dbReference>
<dbReference type="RefSeq" id="WP_003243057.1">
    <property type="nucleotide sequence ID" value="NZ_OZ025638.1"/>
</dbReference>
<dbReference type="SMR" id="O31569"/>
<dbReference type="FunCoup" id="O31569">
    <property type="interactions" value="98"/>
</dbReference>
<dbReference type="STRING" id="224308.BSU08460"/>
<dbReference type="PaxDb" id="224308-BSU08460"/>
<dbReference type="EnsemblBacteria" id="CAB12675">
    <property type="protein sequence ID" value="CAB12675"/>
    <property type="gene ID" value="BSU_08460"/>
</dbReference>
<dbReference type="GeneID" id="939714"/>
<dbReference type="KEGG" id="bsu:BSU08460"/>
<dbReference type="PATRIC" id="fig|224308.179.peg.913"/>
<dbReference type="eggNOG" id="COG0609">
    <property type="taxonomic scope" value="Bacteria"/>
</dbReference>
<dbReference type="InParanoid" id="O31569"/>
<dbReference type="OrthoDB" id="9811721at2"/>
<dbReference type="PhylomeDB" id="O31569"/>
<dbReference type="BioCyc" id="BSUB:BSU08460-MONOMER"/>
<dbReference type="Proteomes" id="UP000001570">
    <property type="component" value="Chromosome"/>
</dbReference>
<dbReference type="GO" id="GO:0005886">
    <property type="term" value="C:plasma membrane"/>
    <property type="evidence" value="ECO:0000318"/>
    <property type="project" value="GO_Central"/>
</dbReference>
<dbReference type="GO" id="GO:0022857">
    <property type="term" value="F:transmembrane transporter activity"/>
    <property type="evidence" value="ECO:0000318"/>
    <property type="project" value="GO_Central"/>
</dbReference>
<dbReference type="GO" id="GO:0033214">
    <property type="term" value="P:siderophore-dependent iron import into cell"/>
    <property type="evidence" value="ECO:0000318"/>
    <property type="project" value="GO_Central"/>
</dbReference>
<dbReference type="CDD" id="cd06550">
    <property type="entry name" value="TM_ABC_iron-siderophores_like"/>
    <property type="match status" value="1"/>
</dbReference>
<dbReference type="FunFam" id="1.10.3470.10:FF:000001">
    <property type="entry name" value="Vitamin B12 ABC transporter permease BtuC"/>
    <property type="match status" value="1"/>
</dbReference>
<dbReference type="Gene3D" id="1.10.3470.10">
    <property type="entry name" value="ABC transporter involved in vitamin B12 uptake, BtuC"/>
    <property type="match status" value="1"/>
</dbReference>
<dbReference type="InterPro" id="IPR037294">
    <property type="entry name" value="ABC_BtuC-like"/>
</dbReference>
<dbReference type="InterPro" id="IPR000522">
    <property type="entry name" value="ABC_transptr_permease_BtuC"/>
</dbReference>
<dbReference type="PANTHER" id="PTHR30472">
    <property type="entry name" value="FERRIC ENTEROBACTIN TRANSPORT SYSTEM PERMEASE PROTEIN"/>
    <property type="match status" value="1"/>
</dbReference>
<dbReference type="PANTHER" id="PTHR30472:SF24">
    <property type="entry name" value="FERRIC ENTEROBACTIN TRANSPORT SYSTEM PERMEASE PROTEIN FEPG"/>
    <property type="match status" value="1"/>
</dbReference>
<dbReference type="Pfam" id="PF01032">
    <property type="entry name" value="FecCD"/>
    <property type="match status" value="1"/>
</dbReference>
<dbReference type="SUPFAM" id="SSF81345">
    <property type="entry name" value="ABC transporter involved in vitamin B12 uptake, BtuC"/>
    <property type="match status" value="1"/>
</dbReference>
<gene>
    <name type="primary">yfhA</name>
    <name type="ordered locus">BSU08460</name>
</gene>